<reference key="1">
    <citation type="journal article" date="2009" name="Genome Res.">
        <title>Comparative genomics of protoploid Saccharomycetaceae.</title>
        <authorList>
            <consortium name="The Genolevures Consortium"/>
            <person name="Souciet J.-L."/>
            <person name="Dujon B."/>
            <person name="Gaillardin C."/>
            <person name="Johnston M."/>
            <person name="Baret P.V."/>
            <person name="Cliften P."/>
            <person name="Sherman D.J."/>
            <person name="Weissenbach J."/>
            <person name="Westhof E."/>
            <person name="Wincker P."/>
            <person name="Jubin C."/>
            <person name="Poulain J."/>
            <person name="Barbe V."/>
            <person name="Segurens B."/>
            <person name="Artiguenave F."/>
            <person name="Anthouard V."/>
            <person name="Vacherie B."/>
            <person name="Val M.-E."/>
            <person name="Fulton R.S."/>
            <person name="Minx P."/>
            <person name="Wilson R."/>
            <person name="Durrens P."/>
            <person name="Jean G."/>
            <person name="Marck C."/>
            <person name="Martin T."/>
            <person name="Nikolski M."/>
            <person name="Rolland T."/>
            <person name="Seret M.-L."/>
            <person name="Casaregola S."/>
            <person name="Despons L."/>
            <person name="Fairhead C."/>
            <person name="Fischer G."/>
            <person name="Lafontaine I."/>
            <person name="Leh V."/>
            <person name="Lemaire M."/>
            <person name="de Montigny J."/>
            <person name="Neuveglise C."/>
            <person name="Thierry A."/>
            <person name="Blanc-Lenfle I."/>
            <person name="Bleykasten C."/>
            <person name="Diffels J."/>
            <person name="Fritsch E."/>
            <person name="Frangeul L."/>
            <person name="Goeffon A."/>
            <person name="Jauniaux N."/>
            <person name="Kachouri-Lafond R."/>
            <person name="Payen C."/>
            <person name="Potier S."/>
            <person name="Pribylova L."/>
            <person name="Ozanne C."/>
            <person name="Richard G.-F."/>
            <person name="Sacerdot C."/>
            <person name="Straub M.-L."/>
            <person name="Talla E."/>
        </authorList>
    </citation>
    <scope>NUCLEOTIDE SEQUENCE [LARGE SCALE GENOMIC DNA]</scope>
    <source>
        <strain>ATCC 56472 / CBS 6340 / NRRL Y-8284</strain>
    </source>
</reference>
<organism>
    <name type="scientific">Lachancea thermotolerans (strain ATCC 56472 / CBS 6340 / NRRL Y-8284)</name>
    <name type="common">Yeast</name>
    <name type="synonym">Kluyveromyces thermotolerans</name>
    <dbReference type="NCBI Taxonomy" id="559295"/>
    <lineage>
        <taxon>Eukaryota</taxon>
        <taxon>Fungi</taxon>
        <taxon>Dikarya</taxon>
        <taxon>Ascomycota</taxon>
        <taxon>Saccharomycotina</taxon>
        <taxon>Saccharomycetes</taxon>
        <taxon>Saccharomycetales</taxon>
        <taxon>Saccharomycetaceae</taxon>
        <taxon>Lachancea</taxon>
    </lineage>
</organism>
<name>SLX4_LACTC</name>
<keyword id="KW-0227">DNA damage</keyword>
<keyword id="KW-0233">DNA recombination</keyword>
<keyword id="KW-0234">DNA repair</keyword>
<keyword id="KW-0539">Nucleus</keyword>
<keyword id="KW-0597">Phosphoprotein</keyword>
<keyword id="KW-1185">Reference proteome</keyword>
<feature type="chain" id="PRO_0000388030" description="Structure-specific endonuclease subunit SLX4">
    <location>
        <begin position="1"/>
        <end position="658"/>
    </location>
</feature>
<feature type="region of interest" description="Disordered" evidence="2">
    <location>
        <begin position="17"/>
        <end position="37"/>
    </location>
</feature>
<feature type="region of interest" description="Disordered" evidence="2">
    <location>
        <begin position="74"/>
        <end position="123"/>
    </location>
</feature>
<feature type="region of interest" description="Disordered" evidence="2">
    <location>
        <begin position="327"/>
        <end position="383"/>
    </location>
</feature>
<feature type="compositionally biased region" description="Low complexity" evidence="2">
    <location>
        <begin position="75"/>
        <end position="90"/>
    </location>
</feature>
<feature type="compositionally biased region" description="Low complexity" evidence="2">
    <location>
        <begin position="99"/>
        <end position="108"/>
    </location>
</feature>
<feature type="compositionally biased region" description="Polar residues" evidence="2">
    <location>
        <begin position="365"/>
        <end position="374"/>
    </location>
</feature>
<sequence length="658" mass="73649">MNFDIVQRRLSLADDVVDSDSPMQEQDELPMTQIPGDSSANVLISTQVQSKLDEMELKKVMKKNLTQFAFESLGATESAPPSRAATPPAKATKRKKSTKAAGRTSTGTGKKRKRTPSSIKSITQFNTENYESLADNRRSRHVVSLLSGKKKKIKDIIDRLQVEDASGSPGPSKSHFSTYSPHEWSHILQLLKSKFPKCPPGQVEAVYKYVYGGAEKDNVWYSSQMPPSDPETQASQEFHYNAQQPMVFSLSQAVEEEFVDAESPALISESFGREQMKGPSFLDEQCISDTTDETGVELKIDEDVARAFRTRMLQPYWLREDVKMKEQPGVSGDKLMKSSSGAARPKEQRWLHLSYNGVDDATKNFPKSPTSTPEPRSGPQVLQRHTYRTPSGLAGRDQLIDLTQCSFNAVKSLISPLKSEVQVPATRTTTWNDKNHSRPQNYGALHQKVQLRLCGGIADSEIYSTLRSRQVVWRLQDFDLQDSEEETKYQLLELDFETVDSKVDLSTAPHHRLSVIKSPTSIASPGDLCDFEVSVKRNASVPPSLPLSAKNLRESLRAIGLKPARTRSEMAEQMGCASQHLIGENAQEQRQGLFDQFTHLVEQSPSLLEKVYTFEPLVLSELIDFLVQKDPFIDKIDDSTIKQWADQMGICLRSAAED</sequence>
<comment type="function">
    <text evidence="1">Regulatory subunit of the SLX1-SLX4 structure-specific endonuclease that resolves DNA secondary structures generated during DNA repair and recombination. Has endonuclease activity towards branched DNA substrates, introducing single-strand cuts in duplex DNA close to junctions with ss-DNA.</text>
</comment>
<comment type="subunit">
    <text evidence="1">Forms a heterodimer with SLX1.</text>
</comment>
<comment type="subcellular location">
    <subcellularLocation>
        <location evidence="1">Nucleus</location>
    </subcellularLocation>
</comment>
<comment type="PTM">
    <text evidence="1">Phosphorylated in response to DNA damage.</text>
</comment>
<comment type="similarity">
    <text evidence="1">Belongs to the SLX4 family.</text>
</comment>
<evidence type="ECO:0000255" key="1">
    <source>
        <dbReference type="HAMAP-Rule" id="MF_03110"/>
    </source>
</evidence>
<evidence type="ECO:0000256" key="2">
    <source>
        <dbReference type="SAM" id="MobiDB-lite"/>
    </source>
</evidence>
<dbReference type="EMBL" id="CU928171">
    <property type="protein sequence ID" value="CAR25124.1"/>
    <property type="molecule type" value="Genomic_DNA"/>
</dbReference>
<dbReference type="RefSeq" id="XP_002555561.1">
    <property type="nucleotide sequence ID" value="XM_002555515.1"/>
</dbReference>
<dbReference type="SMR" id="C5DMW3"/>
<dbReference type="FunCoup" id="C5DMW3">
    <property type="interactions" value="52"/>
</dbReference>
<dbReference type="STRING" id="559295.C5DMW3"/>
<dbReference type="GeneID" id="8293843"/>
<dbReference type="KEGG" id="lth:KLTH0G12166g"/>
<dbReference type="eggNOG" id="ENOG502RYEW">
    <property type="taxonomic scope" value="Eukaryota"/>
</dbReference>
<dbReference type="HOGENOM" id="CLU_022388_0_0_1"/>
<dbReference type="InParanoid" id="C5DMW3"/>
<dbReference type="OMA" id="FMNTQIQ"/>
<dbReference type="OrthoDB" id="4066789at2759"/>
<dbReference type="Proteomes" id="UP000002036">
    <property type="component" value="Chromosome G"/>
</dbReference>
<dbReference type="GO" id="GO:0033557">
    <property type="term" value="C:Slx1-Slx4 complex"/>
    <property type="evidence" value="ECO:0007669"/>
    <property type="project" value="UniProtKB-UniRule"/>
</dbReference>
<dbReference type="GO" id="GO:0017108">
    <property type="term" value="F:5'-flap endonuclease activity"/>
    <property type="evidence" value="ECO:0007669"/>
    <property type="project" value="InterPro"/>
</dbReference>
<dbReference type="GO" id="GO:0006310">
    <property type="term" value="P:DNA recombination"/>
    <property type="evidence" value="ECO:0007669"/>
    <property type="project" value="UniProtKB-UniRule"/>
</dbReference>
<dbReference type="GO" id="GO:0006281">
    <property type="term" value="P:DNA repair"/>
    <property type="evidence" value="ECO:0007669"/>
    <property type="project" value="UniProtKB-UniRule"/>
</dbReference>
<dbReference type="GO" id="GO:0006260">
    <property type="term" value="P:DNA replication"/>
    <property type="evidence" value="ECO:0007669"/>
    <property type="project" value="InterPro"/>
</dbReference>
<dbReference type="HAMAP" id="MF_03110">
    <property type="entry name" value="Endonuc_su_Slx4"/>
    <property type="match status" value="1"/>
</dbReference>
<dbReference type="InterPro" id="IPR027784">
    <property type="entry name" value="Slx4_ascomycetes"/>
</dbReference>
<dbReference type="InterPro" id="IPR018574">
    <property type="entry name" value="Structure-sp_endonuc_su_Slx4"/>
</dbReference>
<dbReference type="Pfam" id="PF09494">
    <property type="entry name" value="Slx4"/>
    <property type="match status" value="1"/>
</dbReference>
<proteinExistence type="inferred from homology"/>
<gene>
    <name evidence="1" type="primary">SLX4</name>
    <name type="ordered locus">KLTH0G12166g</name>
</gene>
<accession>C5DMW3</accession>
<protein>
    <recommendedName>
        <fullName evidence="1">Structure-specific endonuclease subunit SLX4</fullName>
    </recommendedName>
</protein>